<sequence length="278" mass="30914">MAVSSLAGLGLRREMLAEFSQSVPAQIDFFEVAPENWMALGGKYGKQFRALTERHAFFCHGLSLSIGSSAPLDIDFIKGIKAFLDLHGIAVYSEHLSYCSGSGHLYDLMPMPFTPEAVRHIAGRVKQVEDIIERPLILENISFYAAPGAQMTELEFVLAVLEEADCQLLLDVNNIYVNSINHNYDAAAYLAAMPTERIRYLHVAGHYVEAPDLIVDTHGADIVDPVWQLLCDCYALHGPLPTLLERDFNIPPIGELLQEIDRIRDYQAAAIRTSRRAG</sequence>
<name>Y1305_SHEAM</name>
<gene>
    <name type="ordered locus">Sama_1305</name>
</gene>
<accession>A1S556</accession>
<proteinExistence type="inferred from homology"/>
<dbReference type="EMBL" id="CP000507">
    <property type="protein sequence ID" value="ABL99512.1"/>
    <property type="molecule type" value="Genomic_DNA"/>
</dbReference>
<dbReference type="RefSeq" id="WP_011759421.1">
    <property type="nucleotide sequence ID" value="NC_008700.1"/>
</dbReference>
<dbReference type="SMR" id="A1S556"/>
<dbReference type="STRING" id="326297.Sama_1305"/>
<dbReference type="KEGG" id="saz:Sama_1305"/>
<dbReference type="eggNOG" id="COG3220">
    <property type="taxonomic scope" value="Bacteria"/>
</dbReference>
<dbReference type="HOGENOM" id="CLU_064263_0_0_6"/>
<dbReference type="OrthoDB" id="9763101at2"/>
<dbReference type="Proteomes" id="UP000009175">
    <property type="component" value="Chromosome"/>
</dbReference>
<dbReference type="Gene3D" id="3.20.20.150">
    <property type="entry name" value="Divalent-metal-dependent TIM barrel enzymes"/>
    <property type="match status" value="1"/>
</dbReference>
<dbReference type="HAMAP" id="MF_00697">
    <property type="entry name" value="UPF0276"/>
    <property type="match status" value="1"/>
</dbReference>
<dbReference type="InterPro" id="IPR007801">
    <property type="entry name" value="MbnB/TglH/ChrH"/>
</dbReference>
<dbReference type="InterPro" id="IPR036237">
    <property type="entry name" value="Xyl_isomerase-like_sf"/>
</dbReference>
<dbReference type="NCBIfam" id="NF003818">
    <property type="entry name" value="PRK05409.1"/>
    <property type="match status" value="1"/>
</dbReference>
<dbReference type="PANTHER" id="PTHR42194">
    <property type="entry name" value="UPF0276 PROTEIN HI_1600"/>
    <property type="match status" value="1"/>
</dbReference>
<dbReference type="PANTHER" id="PTHR42194:SF1">
    <property type="entry name" value="UPF0276 PROTEIN HI_1600"/>
    <property type="match status" value="1"/>
</dbReference>
<dbReference type="Pfam" id="PF05114">
    <property type="entry name" value="MbnB_TglH_ChrH"/>
    <property type="match status" value="1"/>
</dbReference>
<dbReference type="SUPFAM" id="SSF51658">
    <property type="entry name" value="Xylose isomerase-like"/>
    <property type="match status" value="1"/>
</dbReference>
<comment type="similarity">
    <text evidence="1">Belongs to the UPF0276 family.</text>
</comment>
<keyword id="KW-1185">Reference proteome</keyword>
<organism>
    <name type="scientific">Shewanella amazonensis (strain ATCC BAA-1098 / SB2B)</name>
    <dbReference type="NCBI Taxonomy" id="326297"/>
    <lineage>
        <taxon>Bacteria</taxon>
        <taxon>Pseudomonadati</taxon>
        <taxon>Pseudomonadota</taxon>
        <taxon>Gammaproteobacteria</taxon>
        <taxon>Alteromonadales</taxon>
        <taxon>Shewanellaceae</taxon>
        <taxon>Shewanella</taxon>
    </lineage>
</organism>
<feature type="chain" id="PRO_1000045475" description="UPF0276 protein Sama_1305">
    <location>
        <begin position="1"/>
        <end position="278"/>
    </location>
</feature>
<evidence type="ECO:0000255" key="1">
    <source>
        <dbReference type="HAMAP-Rule" id="MF_00697"/>
    </source>
</evidence>
<reference key="1">
    <citation type="submission" date="2006-12" db="EMBL/GenBank/DDBJ databases">
        <title>Complete sequence of Shewanella amazonensis SB2B.</title>
        <authorList>
            <consortium name="US DOE Joint Genome Institute"/>
            <person name="Copeland A."/>
            <person name="Lucas S."/>
            <person name="Lapidus A."/>
            <person name="Barry K."/>
            <person name="Detter J.C."/>
            <person name="Glavina del Rio T."/>
            <person name="Hammon N."/>
            <person name="Israni S."/>
            <person name="Dalin E."/>
            <person name="Tice H."/>
            <person name="Pitluck S."/>
            <person name="Munk A.C."/>
            <person name="Brettin T."/>
            <person name="Bruce D."/>
            <person name="Han C."/>
            <person name="Tapia R."/>
            <person name="Gilna P."/>
            <person name="Schmutz J."/>
            <person name="Larimer F."/>
            <person name="Land M."/>
            <person name="Hauser L."/>
            <person name="Kyrpides N."/>
            <person name="Mikhailova N."/>
            <person name="Fredrickson J."/>
            <person name="Richardson P."/>
        </authorList>
    </citation>
    <scope>NUCLEOTIDE SEQUENCE [LARGE SCALE GENOMIC DNA]</scope>
    <source>
        <strain>ATCC BAA-1098 / SB2B</strain>
    </source>
</reference>
<protein>
    <recommendedName>
        <fullName evidence="1">UPF0276 protein Sama_1305</fullName>
    </recommendedName>
</protein>